<sequence>MKFELDTTDGRARRGRLVFDRGVVETPCFMPVGTYGTVKGMTPEEVEATGAQIILGNTFHLWLRPGQEIMKLHGDLHDFMQWKGPILTDSGGFQVFSLGDIRKITEQGVHFRNPINGDPIFLDPEKSMEIQYDLGSDIVMIFDECTPYPADWDYAKRSMEMSLRWAKRSRERFDSLGNKNALFGIIQGSVYEDLRDISVKGLVDIGFDGYAVGGLAVGEPKADMHRILEHVCPQIPADKPRYLMGVGKPEDLVEGVRRGIDMFDCVMPTRNARNGHLFVTDGVVKIRNAKYKSDTGPLDPECDCYTCRNYSRAYLHHLDRCNEILGARLNTIHNLRYYQRLMAGLRKAIEEGKLESFVTDFYQRQGREVPPLNVD</sequence>
<keyword id="KW-0328">Glycosyltransferase</keyword>
<keyword id="KW-0479">Metal-binding</keyword>
<keyword id="KW-0671">Queuosine biosynthesis</keyword>
<keyword id="KW-0808">Transferase</keyword>
<keyword id="KW-0819">tRNA processing</keyword>
<keyword id="KW-0862">Zinc</keyword>
<protein>
    <recommendedName>
        <fullName evidence="1">Queuine tRNA-ribosyltransferase</fullName>
        <ecNumber evidence="1">2.4.2.29</ecNumber>
    </recommendedName>
    <alternativeName>
        <fullName evidence="1">Guanine insertion enzyme</fullName>
    </alternativeName>
    <alternativeName>
        <fullName evidence="1">tRNA-guanine transglycosylase</fullName>
    </alternativeName>
</protein>
<reference key="1">
    <citation type="journal article" date="2005" name="Nucleic Acids Res.">
        <title>Genome dynamics and diversity of Shigella species, the etiologic agents of bacillary dysentery.</title>
        <authorList>
            <person name="Yang F."/>
            <person name="Yang J."/>
            <person name="Zhang X."/>
            <person name="Chen L."/>
            <person name="Jiang Y."/>
            <person name="Yan Y."/>
            <person name="Tang X."/>
            <person name="Wang J."/>
            <person name="Xiong Z."/>
            <person name="Dong J."/>
            <person name="Xue Y."/>
            <person name="Zhu Y."/>
            <person name="Xu X."/>
            <person name="Sun L."/>
            <person name="Chen S."/>
            <person name="Nie H."/>
            <person name="Peng J."/>
            <person name="Xu J."/>
            <person name="Wang Y."/>
            <person name="Yuan Z."/>
            <person name="Wen Y."/>
            <person name="Yao Z."/>
            <person name="Shen Y."/>
            <person name="Qiang B."/>
            <person name="Hou Y."/>
            <person name="Yu J."/>
            <person name="Jin Q."/>
        </authorList>
    </citation>
    <scope>NUCLEOTIDE SEQUENCE [LARGE SCALE GENOMIC DNA]</scope>
    <source>
        <strain>Sb227</strain>
    </source>
</reference>
<comment type="function">
    <text evidence="1">Catalyzes the base-exchange of a guanine (G) residue with the queuine precursor 7-aminomethyl-7-deazaguanine (PreQ1) at position 34 (anticodon wobble position) in tRNAs with GU(N) anticodons (tRNA-Asp, -Asn, -His and -Tyr). Catalysis occurs through a double-displacement mechanism. The nucleophile active site attacks the C1' of nucleotide 34 to detach the guanine base from the RNA, forming a covalent enzyme-RNA intermediate. The proton acceptor active site deprotonates the incoming PreQ1, allowing a nucleophilic attack on the C1' of the ribose to form the product. After dissociation, two additional enzymatic reactions on the tRNA convert PreQ1 to queuine (Q), resulting in the hypermodified nucleoside queuosine (7-(((4,5-cis-dihydroxy-2-cyclopenten-1-yl)amino)methyl)-7-deazaguanosine).</text>
</comment>
<comment type="catalytic activity">
    <reaction evidence="1">
        <text>7-aminomethyl-7-carbaguanine + guanosine(34) in tRNA = 7-aminomethyl-7-carbaguanosine(34) in tRNA + guanine</text>
        <dbReference type="Rhea" id="RHEA:24104"/>
        <dbReference type="Rhea" id="RHEA-COMP:10341"/>
        <dbReference type="Rhea" id="RHEA-COMP:10342"/>
        <dbReference type="ChEBI" id="CHEBI:16235"/>
        <dbReference type="ChEBI" id="CHEBI:58703"/>
        <dbReference type="ChEBI" id="CHEBI:74269"/>
        <dbReference type="ChEBI" id="CHEBI:82833"/>
        <dbReference type="EC" id="2.4.2.29"/>
    </reaction>
</comment>
<comment type="cofactor">
    <cofactor evidence="1">
        <name>Zn(2+)</name>
        <dbReference type="ChEBI" id="CHEBI:29105"/>
    </cofactor>
    <text evidence="1">Binds 1 zinc ion per subunit.</text>
</comment>
<comment type="pathway">
    <text evidence="1">tRNA modification; tRNA-queuosine biosynthesis.</text>
</comment>
<comment type="subunit">
    <text evidence="1">Homodimer. Within each dimer, one monomer is responsible for RNA recognition and catalysis, while the other monomer binds to the replacement base PreQ1.</text>
</comment>
<comment type="similarity">
    <text evidence="1">Belongs to the queuine tRNA-ribosyltransferase family.</text>
</comment>
<gene>
    <name evidence="1" type="primary">tgt</name>
    <name type="ordered locus">SBO_0300</name>
</gene>
<feature type="chain" id="PRO_1000016854" description="Queuine tRNA-ribosyltransferase">
    <location>
        <begin position="1"/>
        <end position="375"/>
    </location>
</feature>
<feature type="region of interest" description="RNA binding" evidence="1">
    <location>
        <begin position="245"/>
        <end position="251"/>
    </location>
</feature>
<feature type="region of interest" description="RNA binding; important for wobble base 34 recognition" evidence="1">
    <location>
        <begin position="269"/>
        <end position="273"/>
    </location>
</feature>
<feature type="active site" description="Proton acceptor" evidence="1">
    <location>
        <position position="89"/>
    </location>
</feature>
<feature type="active site" description="Nucleophile" evidence="1">
    <location>
        <position position="264"/>
    </location>
</feature>
<feature type="binding site" evidence="1">
    <location>
        <begin position="89"/>
        <end position="93"/>
    </location>
    <ligand>
        <name>substrate</name>
    </ligand>
</feature>
<feature type="binding site" evidence="1">
    <location>
        <position position="143"/>
    </location>
    <ligand>
        <name>substrate</name>
    </ligand>
</feature>
<feature type="binding site" evidence="1">
    <location>
        <position position="187"/>
    </location>
    <ligand>
        <name>substrate</name>
    </ligand>
</feature>
<feature type="binding site" evidence="1">
    <location>
        <position position="214"/>
    </location>
    <ligand>
        <name>substrate</name>
    </ligand>
</feature>
<feature type="binding site" evidence="1">
    <location>
        <position position="302"/>
    </location>
    <ligand>
        <name>Zn(2+)</name>
        <dbReference type="ChEBI" id="CHEBI:29105"/>
    </ligand>
</feature>
<feature type="binding site" evidence="1">
    <location>
        <position position="304"/>
    </location>
    <ligand>
        <name>Zn(2+)</name>
        <dbReference type="ChEBI" id="CHEBI:29105"/>
    </ligand>
</feature>
<feature type="binding site" evidence="1">
    <location>
        <position position="307"/>
    </location>
    <ligand>
        <name>Zn(2+)</name>
        <dbReference type="ChEBI" id="CHEBI:29105"/>
    </ligand>
</feature>
<feature type="binding site" evidence="1">
    <location>
        <position position="333"/>
    </location>
    <ligand>
        <name>Zn(2+)</name>
        <dbReference type="ChEBI" id="CHEBI:29105"/>
    </ligand>
</feature>
<name>TGT_SHIBS</name>
<proteinExistence type="inferred from homology"/>
<evidence type="ECO:0000255" key="1">
    <source>
        <dbReference type="HAMAP-Rule" id="MF_00168"/>
    </source>
</evidence>
<dbReference type="EC" id="2.4.2.29" evidence="1"/>
<dbReference type="EMBL" id="CP000036">
    <property type="protein sequence ID" value="ABB65013.1"/>
    <property type="molecule type" value="Genomic_DNA"/>
</dbReference>
<dbReference type="RefSeq" id="WP_000667319.1">
    <property type="nucleotide sequence ID" value="NC_007613.1"/>
</dbReference>
<dbReference type="SMR" id="Q325J5"/>
<dbReference type="GeneID" id="93777054"/>
<dbReference type="KEGG" id="sbo:SBO_0300"/>
<dbReference type="HOGENOM" id="CLU_022060_0_1_6"/>
<dbReference type="UniPathway" id="UPA00392"/>
<dbReference type="Proteomes" id="UP000007067">
    <property type="component" value="Chromosome"/>
</dbReference>
<dbReference type="GO" id="GO:0005829">
    <property type="term" value="C:cytosol"/>
    <property type="evidence" value="ECO:0007669"/>
    <property type="project" value="TreeGrafter"/>
</dbReference>
<dbReference type="GO" id="GO:0046872">
    <property type="term" value="F:metal ion binding"/>
    <property type="evidence" value="ECO:0007669"/>
    <property type="project" value="UniProtKB-KW"/>
</dbReference>
<dbReference type="GO" id="GO:0008479">
    <property type="term" value="F:tRNA-guanosine(34) queuine transglycosylase activity"/>
    <property type="evidence" value="ECO:0007669"/>
    <property type="project" value="UniProtKB-UniRule"/>
</dbReference>
<dbReference type="GO" id="GO:0008616">
    <property type="term" value="P:queuosine biosynthetic process"/>
    <property type="evidence" value="ECO:0007669"/>
    <property type="project" value="UniProtKB-UniRule"/>
</dbReference>
<dbReference type="GO" id="GO:0002099">
    <property type="term" value="P:tRNA wobble guanine modification"/>
    <property type="evidence" value="ECO:0007669"/>
    <property type="project" value="TreeGrafter"/>
</dbReference>
<dbReference type="GO" id="GO:0101030">
    <property type="term" value="P:tRNA-guanine transglycosylation"/>
    <property type="evidence" value="ECO:0007669"/>
    <property type="project" value="InterPro"/>
</dbReference>
<dbReference type="FunFam" id="3.20.20.105:FF:000001">
    <property type="entry name" value="Queuine tRNA-ribosyltransferase"/>
    <property type="match status" value="1"/>
</dbReference>
<dbReference type="Gene3D" id="3.20.20.105">
    <property type="entry name" value="Queuine tRNA-ribosyltransferase-like"/>
    <property type="match status" value="1"/>
</dbReference>
<dbReference type="HAMAP" id="MF_00168">
    <property type="entry name" value="Q_tRNA_Tgt"/>
    <property type="match status" value="1"/>
</dbReference>
<dbReference type="InterPro" id="IPR050076">
    <property type="entry name" value="ArchSynthase1/Queuine_TRR"/>
</dbReference>
<dbReference type="InterPro" id="IPR004803">
    <property type="entry name" value="TGT"/>
</dbReference>
<dbReference type="InterPro" id="IPR036511">
    <property type="entry name" value="TGT-like_sf"/>
</dbReference>
<dbReference type="InterPro" id="IPR002616">
    <property type="entry name" value="tRNA_ribo_trans-like"/>
</dbReference>
<dbReference type="NCBIfam" id="TIGR00430">
    <property type="entry name" value="Q_tRNA_tgt"/>
    <property type="match status" value="1"/>
</dbReference>
<dbReference type="NCBIfam" id="TIGR00449">
    <property type="entry name" value="tgt_general"/>
    <property type="match status" value="1"/>
</dbReference>
<dbReference type="PANTHER" id="PTHR46499">
    <property type="entry name" value="QUEUINE TRNA-RIBOSYLTRANSFERASE"/>
    <property type="match status" value="1"/>
</dbReference>
<dbReference type="PANTHER" id="PTHR46499:SF1">
    <property type="entry name" value="QUEUINE TRNA-RIBOSYLTRANSFERASE"/>
    <property type="match status" value="1"/>
</dbReference>
<dbReference type="Pfam" id="PF01702">
    <property type="entry name" value="TGT"/>
    <property type="match status" value="1"/>
</dbReference>
<dbReference type="SUPFAM" id="SSF51713">
    <property type="entry name" value="tRNA-guanine transglycosylase"/>
    <property type="match status" value="1"/>
</dbReference>
<accession>Q325J5</accession>
<organism>
    <name type="scientific">Shigella boydii serotype 4 (strain Sb227)</name>
    <dbReference type="NCBI Taxonomy" id="300268"/>
    <lineage>
        <taxon>Bacteria</taxon>
        <taxon>Pseudomonadati</taxon>
        <taxon>Pseudomonadota</taxon>
        <taxon>Gammaproteobacteria</taxon>
        <taxon>Enterobacterales</taxon>
        <taxon>Enterobacteriaceae</taxon>
        <taxon>Shigella</taxon>
    </lineage>
</organism>